<reference key="1">
    <citation type="submission" date="1994-09" db="EMBL/GenBank/DDBJ databases">
        <authorList>
            <person name="Smith D.R."/>
            <person name="Robison K."/>
        </authorList>
    </citation>
    <scope>NUCLEOTIDE SEQUENCE [GENOMIC DNA]</scope>
</reference>
<reference key="2">
    <citation type="journal article" date="2001" name="Nature">
        <title>Massive gene decay in the leprosy bacillus.</title>
        <authorList>
            <person name="Cole S.T."/>
            <person name="Eiglmeier K."/>
            <person name="Parkhill J."/>
            <person name="James K.D."/>
            <person name="Thomson N.R."/>
            <person name="Wheeler P.R."/>
            <person name="Honore N."/>
            <person name="Garnier T."/>
            <person name="Churcher C.M."/>
            <person name="Harris D.E."/>
            <person name="Mungall K.L."/>
            <person name="Basham D."/>
            <person name="Brown D."/>
            <person name="Chillingworth T."/>
            <person name="Connor R."/>
            <person name="Davies R.M."/>
            <person name="Devlin K."/>
            <person name="Duthoy S."/>
            <person name="Feltwell T."/>
            <person name="Fraser A."/>
            <person name="Hamlin N."/>
            <person name="Holroyd S."/>
            <person name="Hornsby T."/>
            <person name="Jagels K."/>
            <person name="Lacroix C."/>
            <person name="Maclean J."/>
            <person name="Moule S."/>
            <person name="Murphy L.D."/>
            <person name="Oliver K."/>
            <person name="Quail M.A."/>
            <person name="Rajandream M.A."/>
            <person name="Rutherford K.M."/>
            <person name="Rutter S."/>
            <person name="Seeger K."/>
            <person name="Simon S."/>
            <person name="Simmonds M."/>
            <person name="Skelton J."/>
            <person name="Squares R."/>
            <person name="Squares S."/>
            <person name="Stevens K."/>
            <person name="Taylor K."/>
            <person name="Whitehead S."/>
            <person name="Woodward J.R."/>
            <person name="Barrell B.G."/>
        </authorList>
    </citation>
    <scope>NUCLEOTIDE SEQUENCE [LARGE SCALE GENOMIC DNA]</scope>
    <source>
        <strain>TN</strain>
    </source>
</reference>
<protein>
    <recommendedName>
        <fullName>Putative ESAT-6-like protein Y</fullName>
    </recommendedName>
</protein>
<evidence type="ECO:0000305" key="1"/>
<keyword id="KW-1185">Reference proteome</keyword>
<dbReference type="EMBL" id="U15180">
    <property type="protein sequence ID" value="AAA62903.1"/>
    <property type="molecule type" value="Genomic_DNA"/>
</dbReference>
<dbReference type="EMBL" id="AL049191">
    <property type="protein sequence ID" value="CAB39147.1"/>
    <property type="status" value="ALT_INIT"/>
    <property type="molecule type" value="Genomic_DNA"/>
</dbReference>
<dbReference type="EMBL" id="AL583920">
    <property type="protein sequence ID" value="CAC31436.1"/>
    <property type="molecule type" value="Genomic_DNA"/>
</dbReference>
<dbReference type="EMBL" id="AL583921">
    <property type="protein sequence ID" value="CAC31562.1"/>
    <property type="molecule type" value="Genomic_DNA"/>
</dbReference>
<dbReference type="PIR" id="T45169">
    <property type="entry name" value="T45169"/>
</dbReference>
<dbReference type="RefSeq" id="NP_301775.1">
    <property type="nucleotide sequence ID" value="NC_002677.1"/>
</dbReference>
<dbReference type="RefSeq" id="NP_301861.1">
    <property type="nucleotide sequence ID" value="NC_002677.1"/>
</dbReference>
<dbReference type="RefSeq" id="WP_010908099.1">
    <property type="nucleotide sequence ID" value="NC_002677.1"/>
</dbReference>
<dbReference type="SMR" id="Q49945"/>
<dbReference type="STRING" id="272631.gene:17574881"/>
<dbReference type="KEGG" id="mle:ML1055"/>
<dbReference type="KEGG" id="mle:ML1181"/>
<dbReference type="PATRIC" id="fig|272631.5.peg.1894"/>
<dbReference type="Leproma" id="ML1055"/>
<dbReference type="Leproma" id="ML1181"/>
<dbReference type="eggNOG" id="COG4842">
    <property type="taxonomic scope" value="Bacteria"/>
</dbReference>
<dbReference type="HOGENOM" id="CLU_171031_0_0_11"/>
<dbReference type="OrthoDB" id="4739539at2"/>
<dbReference type="Proteomes" id="UP000000806">
    <property type="component" value="Chromosome"/>
</dbReference>
<dbReference type="Gene3D" id="1.10.287.1060">
    <property type="entry name" value="ESAT-6-like"/>
    <property type="match status" value="1"/>
</dbReference>
<dbReference type="InterPro" id="IPR036689">
    <property type="entry name" value="ESAT-6-like_sf"/>
</dbReference>
<dbReference type="InterPro" id="IPR010310">
    <property type="entry name" value="T7SS_ESAT-6-like"/>
</dbReference>
<dbReference type="NCBIfam" id="TIGR03930">
    <property type="entry name" value="WXG100_ESAT6"/>
    <property type="match status" value="1"/>
</dbReference>
<dbReference type="Pfam" id="PF06013">
    <property type="entry name" value="WXG100"/>
    <property type="match status" value="1"/>
</dbReference>
<dbReference type="SUPFAM" id="SSF140453">
    <property type="entry name" value="EsxAB dimer-like"/>
    <property type="match status" value="1"/>
</dbReference>
<accession>Q49945</accession>
<accession>Q9S382</accession>
<feature type="chain" id="PRO_0000167822" description="Putative ESAT-6-like protein Y">
    <location>
        <begin position="1"/>
        <end position="100"/>
    </location>
</feature>
<proteinExistence type="inferred from homology"/>
<organism>
    <name type="scientific">Mycobacterium leprae (strain TN)</name>
    <dbReference type="NCBI Taxonomy" id="272631"/>
    <lineage>
        <taxon>Bacteria</taxon>
        <taxon>Bacillati</taxon>
        <taxon>Actinomycetota</taxon>
        <taxon>Actinomycetes</taxon>
        <taxon>Mycobacteriales</taxon>
        <taxon>Mycobacteriaceae</taxon>
        <taxon>Mycobacterium</taxon>
    </lineage>
</organism>
<name>ES6LY_MYCLE</name>
<comment type="similarity">
    <text evidence="1">Belongs to the WXG100 family.</text>
</comment>
<comment type="sequence caution" evidence="1">
    <conflict type="erroneous initiation">
        <sequence resource="EMBL-CDS" id="CAB39147"/>
    </conflict>
</comment>
<gene>
    <name type="ordered locus">ML1055</name>
    <name type="ORF">u1756c</name>
</gene>
<gene>
    <name type="ordered locus">ML1181</name>
    <name type="ORF">MLCB1701.07c</name>
</gene>
<sequence>MTAAHFMTDPQAMRDMARKFDMHAQNVRDESHKMFMSSMDIAGAGWSGTAQLTSHDTMGQINQAFRHIVTLLQDVRDQLGTAADRYEHQEENSRKILSGS</sequence>